<evidence type="ECO:0000255" key="1">
    <source>
        <dbReference type="HAMAP-Rule" id="MF_00501"/>
    </source>
</evidence>
<evidence type="ECO:0000305" key="2"/>
<comment type="function">
    <text evidence="1">Binds the 23S rRNA.</text>
</comment>
<comment type="subunit">
    <text evidence="1">Part of the 50S ribosomal subunit.</text>
</comment>
<comment type="similarity">
    <text evidence="1">Belongs to the bacterial ribosomal protein bL31 family. Type A subfamily.</text>
</comment>
<sequence length="73" mass="8148">MKKDIHPEYHIIDVKMTDGTVIQMRSTWGAEGDQLSLDIDPSVHPAWTGGTSRLLDTGGRVSKFKKKYEGLGF</sequence>
<reference key="1">
    <citation type="journal article" date="2010" name="ISME J.">
        <title>The complete genome sequence of the algal symbiont Dinoroseobacter shibae: a hitchhiker's guide to life in the sea.</title>
        <authorList>
            <person name="Wagner-Dobler I."/>
            <person name="Ballhausen B."/>
            <person name="Berger M."/>
            <person name="Brinkhoff T."/>
            <person name="Buchholz I."/>
            <person name="Bunk B."/>
            <person name="Cypionka H."/>
            <person name="Daniel R."/>
            <person name="Drepper T."/>
            <person name="Gerdts G."/>
            <person name="Hahnke S."/>
            <person name="Han C."/>
            <person name="Jahn D."/>
            <person name="Kalhoefer D."/>
            <person name="Kiss H."/>
            <person name="Klenk H.P."/>
            <person name="Kyrpides N."/>
            <person name="Liebl W."/>
            <person name="Liesegang H."/>
            <person name="Meincke L."/>
            <person name="Pati A."/>
            <person name="Petersen J."/>
            <person name="Piekarski T."/>
            <person name="Pommerenke C."/>
            <person name="Pradella S."/>
            <person name="Pukall R."/>
            <person name="Rabus R."/>
            <person name="Stackebrandt E."/>
            <person name="Thole S."/>
            <person name="Thompson L."/>
            <person name="Tielen P."/>
            <person name="Tomasch J."/>
            <person name="von Jan M."/>
            <person name="Wanphrut N."/>
            <person name="Wichels A."/>
            <person name="Zech H."/>
            <person name="Simon M."/>
        </authorList>
    </citation>
    <scope>NUCLEOTIDE SEQUENCE [LARGE SCALE GENOMIC DNA]</scope>
    <source>
        <strain>DSM 16493 / NCIMB 14021 / DFL 12</strain>
    </source>
</reference>
<dbReference type="EMBL" id="CP000830">
    <property type="protein sequence ID" value="ABV92089.1"/>
    <property type="molecule type" value="Genomic_DNA"/>
</dbReference>
<dbReference type="RefSeq" id="WP_012177019.1">
    <property type="nucleotide sequence ID" value="NC_009952.1"/>
</dbReference>
<dbReference type="SMR" id="A8LMB2"/>
<dbReference type="STRING" id="398580.Dshi_0340"/>
<dbReference type="KEGG" id="dsh:Dshi_0340"/>
<dbReference type="eggNOG" id="COG0254">
    <property type="taxonomic scope" value="Bacteria"/>
</dbReference>
<dbReference type="HOGENOM" id="CLU_114306_3_2_5"/>
<dbReference type="OrthoDB" id="9803251at2"/>
<dbReference type="Proteomes" id="UP000006833">
    <property type="component" value="Chromosome"/>
</dbReference>
<dbReference type="GO" id="GO:1990904">
    <property type="term" value="C:ribonucleoprotein complex"/>
    <property type="evidence" value="ECO:0007669"/>
    <property type="project" value="UniProtKB-KW"/>
</dbReference>
<dbReference type="GO" id="GO:0005840">
    <property type="term" value="C:ribosome"/>
    <property type="evidence" value="ECO:0007669"/>
    <property type="project" value="UniProtKB-KW"/>
</dbReference>
<dbReference type="GO" id="GO:0019843">
    <property type="term" value="F:rRNA binding"/>
    <property type="evidence" value="ECO:0007669"/>
    <property type="project" value="UniProtKB-KW"/>
</dbReference>
<dbReference type="GO" id="GO:0003735">
    <property type="term" value="F:structural constituent of ribosome"/>
    <property type="evidence" value="ECO:0007669"/>
    <property type="project" value="InterPro"/>
</dbReference>
<dbReference type="GO" id="GO:0006412">
    <property type="term" value="P:translation"/>
    <property type="evidence" value="ECO:0007669"/>
    <property type="project" value="UniProtKB-UniRule"/>
</dbReference>
<dbReference type="Gene3D" id="4.10.830.30">
    <property type="entry name" value="Ribosomal protein L31"/>
    <property type="match status" value="1"/>
</dbReference>
<dbReference type="HAMAP" id="MF_00501">
    <property type="entry name" value="Ribosomal_bL31_1"/>
    <property type="match status" value="1"/>
</dbReference>
<dbReference type="InterPro" id="IPR034704">
    <property type="entry name" value="Ribosomal_bL28/bL31-like_sf"/>
</dbReference>
<dbReference type="InterPro" id="IPR002150">
    <property type="entry name" value="Ribosomal_bL31"/>
</dbReference>
<dbReference type="InterPro" id="IPR027491">
    <property type="entry name" value="Ribosomal_bL31_A"/>
</dbReference>
<dbReference type="InterPro" id="IPR042105">
    <property type="entry name" value="Ribosomal_bL31_sf"/>
</dbReference>
<dbReference type="NCBIfam" id="TIGR00105">
    <property type="entry name" value="L31"/>
    <property type="match status" value="1"/>
</dbReference>
<dbReference type="NCBIfam" id="NF001809">
    <property type="entry name" value="PRK00528.1"/>
    <property type="match status" value="1"/>
</dbReference>
<dbReference type="PANTHER" id="PTHR33280">
    <property type="entry name" value="50S RIBOSOMAL PROTEIN L31, CHLOROPLASTIC"/>
    <property type="match status" value="1"/>
</dbReference>
<dbReference type="PANTHER" id="PTHR33280:SF6">
    <property type="entry name" value="LARGE RIBOSOMAL SUBUNIT PROTEIN BL31A"/>
    <property type="match status" value="1"/>
</dbReference>
<dbReference type="Pfam" id="PF01197">
    <property type="entry name" value="Ribosomal_L31"/>
    <property type="match status" value="1"/>
</dbReference>
<dbReference type="PRINTS" id="PR01249">
    <property type="entry name" value="RIBOSOMALL31"/>
</dbReference>
<dbReference type="SUPFAM" id="SSF143800">
    <property type="entry name" value="L28p-like"/>
    <property type="match status" value="1"/>
</dbReference>
<dbReference type="PROSITE" id="PS01143">
    <property type="entry name" value="RIBOSOMAL_L31"/>
    <property type="match status" value="1"/>
</dbReference>
<feature type="chain" id="PRO_1000126611" description="Large ribosomal subunit protein bL31">
    <location>
        <begin position="1"/>
        <end position="73"/>
    </location>
</feature>
<gene>
    <name evidence="1" type="primary">rpmE</name>
    <name type="ordered locus">Dshi_0340</name>
</gene>
<keyword id="KW-1185">Reference proteome</keyword>
<keyword id="KW-0687">Ribonucleoprotein</keyword>
<keyword id="KW-0689">Ribosomal protein</keyword>
<keyword id="KW-0694">RNA-binding</keyword>
<keyword id="KW-0699">rRNA-binding</keyword>
<proteinExistence type="inferred from homology"/>
<organism>
    <name type="scientific">Dinoroseobacter shibae (strain DSM 16493 / NCIMB 14021 / DFL 12)</name>
    <dbReference type="NCBI Taxonomy" id="398580"/>
    <lineage>
        <taxon>Bacteria</taxon>
        <taxon>Pseudomonadati</taxon>
        <taxon>Pseudomonadota</taxon>
        <taxon>Alphaproteobacteria</taxon>
        <taxon>Rhodobacterales</taxon>
        <taxon>Roseobacteraceae</taxon>
        <taxon>Dinoroseobacter</taxon>
    </lineage>
</organism>
<accession>A8LMB2</accession>
<protein>
    <recommendedName>
        <fullName evidence="1">Large ribosomal subunit protein bL31</fullName>
    </recommendedName>
    <alternativeName>
        <fullName evidence="2">50S ribosomal protein L31</fullName>
    </alternativeName>
</protein>
<name>RL31_DINSH</name>